<dbReference type="EMBL" id="U00090">
    <property type="protein sequence ID" value="AAB92424.1"/>
    <property type="molecule type" value="Genomic_DNA"/>
</dbReference>
<dbReference type="RefSeq" id="NP_443801.1">
    <property type="nucleotide sequence ID" value="NC_000914.2"/>
</dbReference>
<dbReference type="RefSeq" id="WP_010875048.1">
    <property type="nucleotide sequence ID" value="NC_000914.2"/>
</dbReference>
<dbReference type="SMR" id="P55391"/>
<dbReference type="KEGG" id="rhi:NGR_a00050"/>
<dbReference type="PATRIC" id="fig|394.7.peg.3"/>
<dbReference type="eggNOG" id="COG1414">
    <property type="taxonomic scope" value="Bacteria"/>
</dbReference>
<dbReference type="HOGENOM" id="CLU_051007_1_0_5"/>
<dbReference type="OrthoDB" id="7488837at2"/>
<dbReference type="Proteomes" id="UP000001054">
    <property type="component" value="Plasmid pNGR234a"/>
</dbReference>
<dbReference type="GO" id="GO:0006260">
    <property type="term" value="P:DNA replication"/>
    <property type="evidence" value="ECO:0007669"/>
    <property type="project" value="UniProtKB-KW"/>
</dbReference>
<dbReference type="InterPro" id="IPR047611">
    <property type="entry name" value="RepABC_RepC"/>
</dbReference>
<dbReference type="InterPro" id="IPR021760">
    <property type="entry name" value="RepC_C"/>
</dbReference>
<dbReference type="InterPro" id="IPR005090">
    <property type="entry name" value="RepC_N"/>
</dbReference>
<dbReference type="NCBIfam" id="NF010396">
    <property type="entry name" value="PRK13824.1"/>
    <property type="match status" value="1"/>
</dbReference>
<dbReference type="NCBIfam" id="NF040974">
    <property type="entry name" value="RepABC_RepC"/>
    <property type="match status" value="1"/>
</dbReference>
<dbReference type="Pfam" id="PF03428">
    <property type="entry name" value="RP-C"/>
    <property type="match status" value="1"/>
</dbReference>
<dbReference type="Pfam" id="PF11800">
    <property type="entry name" value="RP-C_C"/>
    <property type="match status" value="1"/>
</dbReference>
<geneLocation type="plasmid">
    <name>sym pNGR234a</name>
</geneLocation>
<organism>
    <name type="scientific">Sinorhizobium fredii (strain NBRC 101917 / NGR234)</name>
    <dbReference type="NCBI Taxonomy" id="394"/>
    <lineage>
        <taxon>Bacteria</taxon>
        <taxon>Pseudomonadati</taxon>
        <taxon>Pseudomonadota</taxon>
        <taxon>Alphaproteobacteria</taxon>
        <taxon>Hyphomicrobiales</taxon>
        <taxon>Rhizobiaceae</taxon>
        <taxon>Sinorhizobium/Ensifer group</taxon>
        <taxon>Sinorhizobium</taxon>
    </lineage>
</organism>
<name>Y4CI_SINFN</name>
<sequence>MQDGSVTTPFGRRSMTLGMLASQYMSRELEPETSADKWKLFRALCEAKPKLGISERALSVMNALLSFYPETTLSEENGLIVFPSNMQLSLRAHGMAEATLRRHIAALVDAGLLARRDSPNGKRYARKDGDGSIDEAYGFSLAPLLSRAREIEQIAAYVKIERLQLRRLRERLTICRRDIGKLIEVAIEEGVDGNWDGIHQHYRSLVATIPRVATAATVAPILEEMEMLREEISNLLEIRLKIENLSGNPDQIERHKQNSHPESTNEFEPSSREEQGERPSPAIEPQREPMKVFPLGMVLRACPSISDYGPGGVVASPRDLMQAAVVVRSMLCVSPSAYQDACEVMGPENASAVMACILERSGHIKSPGGYLRDLTSRAKRGEFSPGPVLMALLRARGGSDRLAS</sequence>
<comment type="similarity">
    <text evidence="2">To A.rhizogenes possible replication protein C (RepC).</text>
</comment>
<gene>
    <name type="ordered locus">NGR_a00050</name>
    <name type="ORF">y4cI</name>
</gene>
<keyword id="KW-0235">DNA replication</keyword>
<keyword id="KW-0614">Plasmid</keyword>
<keyword id="KW-1185">Reference proteome</keyword>
<accession>P55391</accession>
<evidence type="ECO:0000256" key="1">
    <source>
        <dbReference type="SAM" id="MobiDB-lite"/>
    </source>
</evidence>
<evidence type="ECO:0000305" key="2"/>
<reference key="1">
    <citation type="journal article" date="1997" name="Nature">
        <title>Molecular basis of symbiosis between Rhizobium and legumes.</title>
        <authorList>
            <person name="Freiberg C.A."/>
            <person name="Fellay R."/>
            <person name="Bairoch A."/>
            <person name="Broughton W.J."/>
            <person name="Rosenthal A."/>
            <person name="Perret X."/>
        </authorList>
    </citation>
    <scope>NUCLEOTIDE SEQUENCE [LARGE SCALE GENOMIC DNA]</scope>
    <source>
        <strain>NBRC 101917 / NGR234</strain>
    </source>
</reference>
<reference key="2">
    <citation type="journal article" date="2009" name="Appl. Environ. Microbiol.">
        <title>Rhizobium sp. strain NGR234 possesses a remarkable number of secretion systems.</title>
        <authorList>
            <person name="Schmeisser C."/>
            <person name="Liesegang H."/>
            <person name="Krysciak D."/>
            <person name="Bakkou N."/>
            <person name="Le Quere A."/>
            <person name="Wollherr A."/>
            <person name="Heinemeyer I."/>
            <person name="Morgenstern B."/>
            <person name="Pommerening-Roeser A."/>
            <person name="Flores M."/>
            <person name="Palacios R."/>
            <person name="Brenner S."/>
            <person name="Gottschalk G."/>
            <person name="Schmitz R.A."/>
            <person name="Broughton W.J."/>
            <person name="Perret X."/>
            <person name="Strittmatter A.W."/>
            <person name="Streit W.R."/>
        </authorList>
    </citation>
    <scope>NUCLEOTIDE SEQUENCE [LARGE SCALE GENOMIC DNA]</scope>
    <source>
        <strain>NBRC 101917 / NGR234</strain>
    </source>
</reference>
<proteinExistence type="predicted"/>
<protein>
    <recommendedName>
        <fullName>Putative replication protein C</fullName>
    </recommendedName>
</protein>
<feature type="chain" id="PRO_0000200817" description="Putative replication protein C">
    <location>
        <begin position="1"/>
        <end position="404"/>
    </location>
</feature>
<feature type="region of interest" description="Disordered" evidence="1">
    <location>
        <begin position="249"/>
        <end position="287"/>
    </location>
</feature>